<protein>
    <recommendedName>
        <fullName evidence="1">tRNA dimethylallyltransferase</fullName>
        <ecNumber evidence="1">2.5.1.75</ecNumber>
    </recommendedName>
    <alternativeName>
        <fullName evidence="1">Dimethylallyl diphosphate:tRNA dimethylallyltransferase</fullName>
        <shortName evidence="1">DMAPP:tRNA dimethylallyltransferase</shortName>
        <shortName evidence="1">DMATase</shortName>
    </alternativeName>
    <alternativeName>
        <fullName evidence="1">Isopentenyl-diphosphate:tRNA isopentenyltransferase</fullName>
        <shortName evidence="1">IPP transferase</shortName>
        <shortName evidence="1">IPPT</shortName>
        <shortName evidence="1">IPTase</shortName>
    </alternativeName>
</protein>
<proteinExistence type="inferred from homology"/>
<dbReference type="EC" id="2.5.1.75" evidence="1"/>
<dbReference type="EMBL" id="AM286280">
    <property type="protein sequence ID" value="CAL08645.1"/>
    <property type="molecule type" value="Genomic_DNA"/>
</dbReference>
<dbReference type="RefSeq" id="WP_003015652.1">
    <property type="nucleotide sequence ID" value="NC_008245.1"/>
</dbReference>
<dbReference type="SMR" id="Q14IJ4"/>
<dbReference type="KEGG" id="ftf:FTF0629"/>
<dbReference type="HOGENOM" id="CLU_032616_0_0_6"/>
<dbReference type="GO" id="GO:0005524">
    <property type="term" value="F:ATP binding"/>
    <property type="evidence" value="ECO:0007669"/>
    <property type="project" value="UniProtKB-UniRule"/>
</dbReference>
<dbReference type="GO" id="GO:0052381">
    <property type="term" value="F:tRNA dimethylallyltransferase activity"/>
    <property type="evidence" value="ECO:0007669"/>
    <property type="project" value="UniProtKB-UniRule"/>
</dbReference>
<dbReference type="GO" id="GO:0006400">
    <property type="term" value="P:tRNA modification"/>
    <property type="evidence" value="ECO:0007669"/>
    <property type="project" value="TreeGrafter"/>
</dbReference>
<dbReference type="FunFam" id="1.10.20.140:FF:000001">
    <property type="entry name" value="tRNA dimethylallyltransferase"/>
    <property type="match status" value="1"/>
</dbReference>
<dbReference type="Gene3D" id="1.10.20.140">
    <property type="match status" value="1"/>
</dbReference>
<dbReference type="Gene3D" id="3.40.50.300">
    <property type="entry name" value="P-loop containing nucleotide triphosphate hydrolases"/>
    <property type="match status" value="1"/>
</dbReference>
<dbReference type="HAMAP" id="MF_00185">
    <property type="entry name" value="IPP_trans"/>
    <property type="match status" value="1"/>
</dbReference>
<dbReference type="InterPro" id="IPR039657">
    <property type="entry name" value="Dimethylallyltransferase"/>
</dbReference>
<dbReference type="InterPro" id="IPR018022">
    <property type="entry name" value="IPT"/>
</dbReference>
<dbReference type="InterPro" id="IPR027417">
    <property type="entry name" value="P-loop_NTPase"/>
</dbReference>
<dbReference type="NCBIfam" id="TIGR00174">
    <property type="entry name" value="miaA"/>
    <property type="match status" value="1"/>
</dbReference>
<dbReference type="PANTHER" id="PTHR11088">
    <property type="entry name" value="TRNA DIMETHYLALLYLTRANSFERASE"/>
    <property type="match status" value="1"/>
</dbReference>
<dbReference type="PANTHER" id="PTHR11088:SF60">
    <property type="entry name" value="TRNA DIMETHYLALLYLTRANSFERASE"/>
    <property type="match status" value="1"/>
</dbReference>
<dbReference type="Pfam" id="PF01715">
    <property type="entry name" value="IPPT"/>
    <property type="match status" value="1"/>
</dbReference>
<dbReference type="SUPFAM" id="SSF52540">
    <property type="entry name" value="P-loop containing nucleoside triphosphate hydrolases"/>
    <property type="match status" value="1"/>
</dbReference>
<comment type="function">
    <text evidence="1">Catalyzes the transfer of a dimethylallyl group onto the adenine at position 37 in tRNAs that read codons beginning with uridine, leading to the formation of N6-(dimethylallyl)adenosine (i(6)A).</text>
</comment>
<comment type="catalytic activity">
    <reaction evidence="1">
        <text>adenosine(37) in tRNA + dimethylallyl diphosphate = N(6)-dimethylallyladenosine(37) in tRNA + diphosphate</text>
        <dbReference type="Rhea" id="RHEA:26482"/>
        <dbReference type="Rhea" id="RHEA-COMP:10162"/>
        <dbReference type="Rhea" id="RHEA-COMP:10375"/>
        <dbReference type="ChEBI" id="CHEBI:33019"/>
        <dbReference type="ChEBI" id="CHEBI:57623"/>
        <dbReference type="ChEBI" id="CHEBI:74411"/>
        <dbReference type="ChEBI" id="CHEBI:74415"/>
        <dbReference type="EC" id="2.5.1.75"/>
    </reaction>
</comment>
<comment type="cofactor">
    <cofactor evidence="1">
        <name>Mg(2+)</name>
        <dbReference type="ChEBI" id="CHEBI:18420"/>
    </cofactor>
</comment>
<comment type="subunit">
    <text evidence="1">Monomer.</text>
</comment>
<comment type="similarity">
    <text evidence="1">Belongs to the IPP transferase family.</text>
</comment>
<name>MIAA_FRAT1</name>
<evidence type="ECO:0000255" key="1">
    <source>
        <dbReference type="HAMAP-Rule" id="MF_00185"/>
    </source>
</evidence>
<accession>Q14IJ4</accession>
<gene>
    <name evidence="1" type="primary">miaA</name>
    <name type="ordered locus">FTF0629</name>
</gene>
<sequence>MSKLIYGLAGPTASGKTSLSILLAKKINAEIISVDSSLVYKGMDIGTAKPTLQEQDGIKHHLIDIIEPTGNFSVADFISSVNKLKKEIWARGREVLLVGGTMLYFKGLIEGLSALPESQAEIREALEYQKKAKGLQYLHQQLNEIDPQSAQKINPNDQQRIFRALEVIMISGKKYSELVKTSKVGGLDEDLKLCALVPNDRSILHKNIESRFRQMLDQGFLDEVQNLHKNPMLTKETTAIRSVGYRQAWEYLDGDISYDEFVKKGIVATRQLAKRQLTWIRNWQSSINIVAMENETKELDILKYFGYK</sequence>
<feature type="chain" id="PRO_1000020598" description="tRNA dimethylallyltransferase">
    <location>
        <begin position="1"/>
        <end position="308"/>
    </location>
</feature>
<feature type="region of interest" description="Interaction with substrate tRNA" evidence="1">
    <location>
        <begin position="35"/>
        <end position="38"/>
    </location>
</feature>
<feature type="region of interest" description="Interaction with substrate tRNA" evidence="1">
    <location>
        <begin position="159"/>
        <end position="163"/>
    </location>
</feature>
<feature type="binding site" evidence="1">
    <location>
        <begin position="10"/>
        <end position="17"/>
    </location>
    <ligand>
        <name>ATP</name>
        <dbReference type="ChEBI" id="CHEBI:30616"/>
    </ligand>
</feature>
<feature type="binding site" evidence="1">
    <location>
        <begin position="12"/>
        <end position="17"/>
    </location>
    <ligand>
        <name>substrate</name>
    </ligand>
</feature>
<feature type="site" description="Interaction with substrate tRNA" evidence="1">
    <location>
        <position position="101"/>
    </location>
</feature>
<feature type="site" description="Interaction with substrate tRNA" evidence="1">
    <location>
        <position position="123"/>
    </location>
</feature>
<reference key="1">
    <citation type="journal article" date="2007" name="PLoS ONE">
        <title>Genome sequencing shows that European isolates of Francisella tularensis subspecies tularensis are almost identical to US laboratory strain Schu S4.</title>
        <authorList>
            <person name="Chaudhuri R.R."/>
            <person name="Ren C.-P."/>
            <person name="Desmond L."/>
            <person name="Vincent G.A."/>
            <person name="Silman N.J."/>
            <person name="Brehm J.K."/>
            <person name="Elmore M.J."/>
            <person name="Hudson M.J."/>
            <person name="Forsman M."/>
            <person name="Isherwood K.E."/>
            <person name="Gurycova D."/>
            <person name="Minton N.P."/>
            <person name="Titball R.W."/>
            <person name="Pallen M.J."/>
            <person name="Vipond R."/>
        </authorList>
    </citation>
    <scope>NUCLEOTIDE SEQUENCE [LARGE SCALE GENOMIC DNA]</scope>
    <source>
        <strain>FSC 198</strain>
    </source>
</reference>
<organism>
    <name type="scientific">Francisella tularensis subsp. tularensis (strain FSC 198)</name>
    <dbReference type="NCBI Taxonomy" id="393115"/>
    <lineage>
        <taxon>Bacteria</taxon>
        <taxon>Pseudomonadati</taxon>
        <taxon>Pseudomonadota</taxon>
        <taxon>Gammaproteobacteria</taxon>
        <taxon>Thiotrichales</taxon>
        <taxon>Francisellaceae</taxon>
        <taxon>Francisella</taxon>
    </lineage>
</organism>
<keyword id="KW-0067">ATP-binding</keyword>
<keyword id="KW-0460">Magnesium</keyword>
<keyword id="KW-0547">Nucleotide-binding</keyword>
<keyword id="KW-0808">Transferase</keyword>
<keyword id="KW-0819">tRNA processing</keyword>